<reference key="1">
    <citation type="journal article" date="1997" name="Nature">
        <title>The complete genome sequence of the Gram-positive bacterium Bacillus subtilis.</title>
        <authorList>
            <person name="Kunst F."/>
            <person name="Ogasawara N."/>
            <person name="Moszer I."/>
            <person name="Albertini A.M."/>
            <person name="Alloni G."/>
            <person name="Azevedo V."/>
            <person name="Bertero M.G."/>
            <person name="Bessieres P."/>
            <person name="Bolotin A."/>
            <person name="Borchert S."/>
            <person name="Borriss R."/>
            <person name="Boursier L."/>
            <person name="Brans A."/>
            <person name="Braun M."/>
            <person name="Brignell S.C."/>
            <person name="Bron S."/>
            <person name="Brouillet S."/>
            <person name="Bruschi C.V."/>
            <person name="Caldwell B."/>
            <person name="Capuano V."/>
            <person name="Carter N.M."/>
            <person name="Choi S.-K."/>
            <person name="Codani J.-J."/>
            <person name="Connerton I.F."/>
            <person name="Cummings N.J."/>
            <person name="Daniel R.A."/>
            <person name="Denizot F."/>
            <person name="Devine K.M."/>
            <person name="Duesterhoeft A."/>
            <person name="Ehrlich S.D."/>
            <person name="Emmerson P.T."/>
            <person name="Entian K.-D."/>
            <person name="Errington J."/>
            <person name="Fabret C."/>
            <person name="Ferrari E."/>
            <person name="Foulger D."/>
            <person name="Fritz C."/>
            <person name="Fujita M."/>
            <person name="Fujita Y."/>
            <person name="Fuma S."/>
            <person name="Galizzi A."/>
            <person name="Galleron N."/>
            <person name="Ghim S.-Y."/>
            <person name="Glaser P."/>
            <person name="Goffeau A."/>
            <person name="Golightly E.J."/>
            <person name="Grandi G."/>
            <person name="Guiseppi G."/>
            <person name="Guy B.J."/>
            <person name="Haga K."/>
            <person name="Haiech J."/>
            <person name="Harwood C.R."/>
            <person name="Henaut A."/>
            <person name="Hilbert H."/>
            <person name="Holsappel S."/>
            <person name="Hosono S."/>
            <person name="Hullo M.-F."/>
            <person name="Itaya M."/>
            <person name="Jones L.-M."/>
            <person name="Joris B."/>
            <person name="Karamata D."/>
            <person name="Kasahara Y."/>
            <person name="Klaerr-Blanchard M."/>
            <person name="Klein C."/>
            <person name="Kobayashi Y."/>
            <person name="Koetter P."/>
            <person name="Koningstein G."/>
            <person name="Krogh S."/>
            <person name="Kumano M."/>
            <person name="Kurita K."/>
            <person name="Lapidus A."/>
            <person name="Lardinois S."/>
            <person name="Lauber J."/>
            <person name="Lazarevic V."/>
            <person name="Lee S.-M."/>
            <person name="Levine A."/>
            <person name="Liu H."/>
            <person name="Masuda S."/>
            <person name="Mauel C."/>
            <person name="Medigue C."/>
            <person name="Medina N."/>
            <person name="Mellado R.P."/>
            <person name="Mizuno M."/>
            <person name="Moestl D."/>
            <person name="Nakai S."/>
            <person name="Noback M."/>
            <person name="Noone D."/>
            <person name="O'Reilly M."/>
            <person name="Ogawa K."/>
            <person name="Ogiwara A."/>
            <person name="Oudega B."/>
            <person name="Park S.-H."/>
            <person name="Parro V."/>
            <person name="Pohl T.M."/>
            <person name="Portetelle D."/>
            <person name="Porwollik S."/>
            <person name="Prescott A.M."/>
            <person name="Presecan E."/>
            <person name="Pujic P."/>
            <person name="Purnelle B."/>
            <person name="Rapoport G."/>
            <person name="Rey M."/>
            <person name="Reynolds S."/>
            <person name="Rieger M."/>
            <person name="Rivolta C."/>
            <person name="Rocha E."/>
            <person name="Roche B."/>
            <person name="Rose M."/>
            <person name="Sadaie Y."/>
            <person name="Sato T."/>
            <person name="Scanlan E."/>
            <person name="Schleich S."/>
            <person name="Schroeter R."/>
            <person name="Scoffone F."/>
            <person name="Sekiguchi J."/>
            <person name="Sekowska A."/>
            <person name="Seror S.J."/>
            <person name="Serror P."/>
            <person name="Shin B.-S."/>
            <person name="Soldo B."/>
            <person name="Sorokin A."/>
            <person name="Tacconi E."/>
            <person name="Takagi T."/>
            <person name="Takahashi H."/>
            <person name="Takemaru K."/>
            <person name="Takeuchi M."/>
            <person name="Tamakoshi A."/>
            <person name="Tanaka T."/>
            <person name="Terpstra P."/>
            <person name="Tognoni A."/>
            <person name="Tosato V."/>
            <person name="Uchiyama S."/>
            <person name="Vandenbol M."/>
            <person name="Vannier F."/>
            <person name="Vassarotti A."/>
            <person name="Viari A."/>
            <person name="Wambutt R."/>
            <person name="Wedler E."/>
            <person name="Wedler H."/>
            <person name="Weitzenegger T."/>
            <person name="Winters P."/>
            <person name="Wipat A."/>
            <person name="Yamamoto H."/>
            <person name="Yamane K."/>
            <person name="Yasumoto K."/>
            <person name="Yata K."/>
            <person name="Yoshida K."/>
            <person name="Yoshikawa H.-F."/>
            <person name="Zumstein E."/>
            <person name="Yoshikawa H."/>
            <person name="Danchin A."/>
        </authorList>
    </citation>
    <scope>NUCLEOTIDE SEQUENCE [LARGE SCALE GENOMIC DNA]</scope>
    <source>
        <strain>168</strain>
    </source>
</reference>
<sequence>MFKKGQKVIVDFTDEIGAVAKVDYRYNQIEVKYPDGTYQVVGFHKVRKVED</sequence>
<name>YORQ_BACSU</name>
<accession>O31897</accession>
<dbReference type="EMBL" id="AL009126">
    <property type="protein sequence ID" value="CAB13921.1"/>
    <property type="molecule type" value="Genomic_DNA"/>
</dbReference>
<dbReference type="RefSeq" id="NP_389911.1">
    <property type="nucleotide sequence ID" value="NC_000964.3"/>
</dbReference>
<dbReference type="RefSeq" id="WP_004399305.1">
    <property type="nucleotide sequence ID" value="NZ_OZ025638.1"/>
</dbReference>
<dbReference type="SMR" id="O31897"/>
<dbReference type="FunCoup" id="O31897">
    <property type="interactions" value="67"/>
</dbReference>
<dbReference type="STRING" id="224308.BSU20290"/>
<dbReference type="PaxDb" id="224308-BSU20290"/>
<dbReference type="EnsemblBacteria" id="CAB13921">
    <property type="protein sequence ID" value="CAB13921"/>
    <property type="gene ID" value="BSU_20290"/>
</dbReference>
<dbReference type="GeneID" id="939534"/>
<dbReference type="KEGG" id="bsu:BSU20290"/>
<dbReference type="PATRIC" id="fig|224308.179.peg.2219"/>
<dbReference type="InParanoid" id="O31897"/>
<dbReference type="OrthoDB" id="2891814at2"/>
<dbReference type="BioCyc" id="BSUB:BSU20290-MONOMER"/>
<dbReference type="Proteomes" id="UP000001570">
    <property type="component" value="Chromosome"/>
</dbReference>
<feature type="chain" id="PRO_0000370261" description="SPbeta prophage-derived uncharacterized protein YorQ">
    <location>
        <begin position="1"/>
        <end position="51"/>
    </location>
</feature>
<organism>
    <name type="scientific">Bacillus subtilis (strain 168)</name>
    <dbReference type="NCBI Taxonomy" id="224308"/>
    <lineage>
        <taxon>Bacteria</taxon>
        <taxon>Bacillati</taxon>
        <taxon>Bacillota</taxon>
        <taxon>Bacilli</taxon>
        <taxon>Bacillales</taxon>
        <taxon>Bacillaceae</taxon>
        <taxon>Bacillus</taxon>
    </lineage>
</organism>
<keyword id="KW-1185">Reference proteome</keyword>
<gene>
    <name type="primary">yorQ</name>
    <name type="ordered locus">BSU20290</name>
</gene>
<proteinExistence type="predicted"/>
<protein>
    <recommendedName>
        <fullName>SPbeta prophage-derived uncharacterized protein YorQ</fullName>
    </recommendedName>
</protein>